<organism>
    <name type="scientific">Geobacillus sp. (strain WCH70)</name>
    <dbReference type="NCBI Taxonomy" id="471223"/>
    <lineage>
        <taxon>Bacteria</taxon>
        <taxon>Bacillati</taxon>
        <taxon>Bacillota</taxon>
        <taxon>Bacilli</taxon>
        <taxon>Bacillales</taxon>
        <taxon>Anoxybacillaceae</taxon>
        <taxon>Geobacillus</taxon>
    </lineage>
</organism>
<proteinExistence type="inferred from homology"/>
<feature type="chain" id="PRO_1000205212" description="ATP-dependent dethiobiotin synthetase BioD">
    <location>
        <begin position="1"/>
        <end position="239"/>
    </location>
</feature>
<feature type="active site" evidence="1">
    <location>
        <position position="38"/>
    </location>
</feature>
<feature type="binding site" evidence="1">
    <location>
        <begin position="13"/>
        <end position="18"/>
    </location>
    <ligand>
        <name>ATP</name>
        <dbReference type="ChEBI" id="CHEBI:30616"/>
    </ligand>
</feature>
<feature type="binding site" evidence="1">
    <location>
        <position position="17"/>
    </location>
    <ligand>
        <name>Mg(2+)</name>
        <dbReference type="ChEBI" id="CHEBI:18420"/>
    </ligand>
</feature>
<feature type="binding site" evidence="1">
    <location>
        <position position="42"/>
    </location>
    <ligand>
        <name>substrate</name>
    </ligand>
</feature>
<feature type="binding site" evidence="1">
    <location>
        <position position="59"/>
    </location>
    <ligand>
        <name>Mg(2+)</name>
        <dbReference type="ChEBI" id="CHEBI:18420"/>
    </ligand>
</feature>
<feature type="binding site" evidence="1">
    <location>
        <begin position="111"/>
        <end position="114"/>
    </location>
    <ligand>
        <name>ATP</name>
        <dbReference type="ChEBI" id="CHEBI:30616"/>
    </ligand>
</feature>
<feature type="binding site" evidence="1">
    <location>
        <position position="111"/>
    </location>
    <ligand>
        <name>Mg(2+)</name>
        <dbReference type="ChEBI" id="CHEBI:18420"/>
    </ligand>
</feature>
<feature type="binding site" evidence="1">
    <location>
        <begin position="175"/>
        <end position="176"/>
    </location>
    <ligand>
        <name>ATP</name>
        <dbReference type="ChEBI" id="CHEBI:30616"/>
    </ligand>
</feature>
<feature type="binding site" evidence="1">
    <location>
        <begin position="204"/>
        <end position="206"/>
    </location>
    <ligand>
        <name>ATP</name>
        <dbReference type="ChEBI" id="CHEBI:30616"/>
    </ligand>
</feature>
<reference key="1">
    <citation type="submission" date="2009-06" db="EMBL/GenBank/DDBJ databases">
        <title>Complete sequence of chromosome of Geopacillus sp. WCH70.</title>
        <authorList>
            <consortium name="US DOE Joint Genome Institute"/>
            <person name="Lucas S."/>
            <person name="Copeland A."/>
            <person name="Lapidus A."/>
            <person name="Glavina del Rio T."/>
            <person name="Dalin E."/>
            <person name="Tice H."/>
            <person name="Bruce D."/>
            <person name="Goodwin L."/>
            <person name="Pitluck S."/>
            <person name="Chertkov O."/>
            <person name="Brettin T."/>
            <person name="Detter J.C."/>
            <person name="Han C."/>
            <person name="Larimer F."/>
            <person name="Land M."/>
            <person name="Hauser L."/>
            <person name="Kyrpides N."/>
            <person name="Mikhailova N."/>
            <person name="Brumm P."/>
            <person name="Mead D.A."/>
            <person name="Richardson P."/>
        </authorList>
    </citation>
    <scope>NUCLEOTIDE SEQUENCE [LARGE SCALE GENOMIC DNA]</scope>
    <source>
        <strain>WCH70</strain>
    </source>
</reference>
<evidence type="ECO:0000255" key="1">
    <source>
        <dbReference type="HAMAP-Rule" id="MF_00336"/>
    </source>
</evidence>
<comment type="function">
    <text evidence="1">Catalyzes a mechanistically unusual reaction, the ATP-dependent insertion of CO2 between the N7 and N8 nitrogen atoms of 7,8-diaminopelargonic acid (DAPA, also called 7,8-diammoniononanoate) to form a ureido ring.</text>
</comment>
<comment type="catalytic activity">
    <reaction evidence="1">
        <text>(7R,8S)-7,8-diammoniononanoate + CO2 + ATP = (4R,5S)-dethiobiotin + ADP + phosphate + 3 H(+)</text>
        <dbReference type="Rhea" id="RHEA:15805"/>
        <dbReference type="ChEBI" id="CHEBI:15378"/>
        <dbReference type="ChEBI" id="CHEBI:16526"/>
        <dbReference type="ChEBI" id="CHEBI:30616"/>
        <dbReference type="ChEBI" id="CHEBI:43474"/>
        <dbReference type="ChEBI" id="CHEBI:149469"/>
        <dbReference type="ChEBI" id="CHEBI:149473"/>
        <dbReference type="ChEBI" id="CHEBI:456216"/>
        <dbReference type="EC" id="6.3.3.3"/>
    </reaction>
</comment>
<comment type="cofactor">
    <cofactor evidence="1">
        <name>Mg(2+)</name>
        <dbReference type="ChEBI" id="CHEBI:18420"/>
    </cofactor>
</comment>
<comment type="pathway">
    <text evidence="1">Cofactor biosynthesis; biotin biosynthesis; biotin from 7,8-diaminononanoate: step 1/2.</text>
</comment>
<comment type="subunit">
    <text evidence="1">Homodimer.</text>
</comment>
<comment type="subcellular location">
    <subcellularLocation>
        <location evidence="1">Cytoplasm</location>
    </subcellularLocation>
</comment>
<comment type="similarity">
    <text evidence="1">Belongs to the dethiobiotin synthetase family.</text>
</comment>
<gene>
    <name evidence="1" type="primary">bioD</name>
    <name type="ordered locus">GWCH70_2946</name>
</gene>
<keyword id="KW-0067">ATP-binding</keyword>
<keyword id="KW-0093">Biotin biosynthesis</keyword>
<keyword id="KW-0963">Cytoplasm</keyword>
<keyword id="KW-0436">Ligase</keyword>
<keyword id="KW-0460">Magnesium</keyword>
<keyword id="KW-0479">Metal-binding</keyword>
<keyword id="KW-0547">Nucleotide-binding</keyword>
<accession>C5D7L1</accession>
<sequence>MGKAIFITGTGTEIGKTVATSFLAFAFQKMGLNTKIFKPIQTGLAEDGVSFADQYWYEKVVGLAQSEGLYYMEPAVSPHLAATLTNTTIDPALIVEKIEQWKRQYDIVLVEGAGGLAVPLIEKEQGFYMTNDLIREYNIPIIIVSLAGLGAIHHTVTTVSYAQQQGIRILGLIFNQFNAESIIHVNNIETIKKMLDLPVIATLPSLAKVTKHTMMALAERWLENNEQKQLLQEVLSVAI</sequence>
<dbReference type="EC" id="6.3.3.3" evidence="1"/>
<dbReference type="EMBL" id="CP001638">
    <property type="protein sequence ID" value="ACS25621.1"/>
    <property type="molecule type" value="Genomic_DNA"/>
</dbReference>
<dbReference type="SMR" id="C5D7L1"/>
<dbReference type="STRING" id="471223.GWCH70_2946"/>
<dbReference type="KEGG" id="gwc:GWCH70_2946"/>
<dbReference type="eggNOG" id="COG0132">
    <property type="taxonomic scope" value="Bacteria"/>
</dbReference>
<dbReference type="HOGENOM" id="CLU_072551_3_0_9"/>
<dbReference type="OrthoDB" id="9802097at2"/>
<dbReference type="UniPathway" id="UPA00078">
    <property type="reaction ID" value="UER00161"/>
</dbReference>
<dbReference type="GO" id="GO:0005829">
    <property type="term" value="C:cytosol"/>
    <property type="evidence" value="ECO:0007669"/>
    <property type="project" value="TreeGrafter"/>
</dbReference>
<dbReference type="GO" id="GO:0005524">
    <property type="term" value="F:ATP binding"/>
    <property type="evidence" value="ECO:0007669"/>
    <property type="project" value="UniProtKB-UniRule"/>
</dbReference>
<dbReference type="GO" id="GO:0004141">
    <property type="term" value="F:dethiobiotin synthase activity"/>
    <property type="evidence" value="ECO:0007669"/>
    <property type="project" value="UniProtKB-UniRule"/>
</dbReference>
<dbReference type="GO" id="GO:0000287">
    <property type="term" value="F:magnesium ion binding"/>
    <property type="evidence" value="ECO:0007669"/>
    <property type="project" value="UniProtKB-UniRule"/>
</dbReference>
<dbReference type="GO" id="GO:0009102">
    <property type="term" value="P:biotin biosynthetic process"/>
    <property type="evidence" value="ECO:0007669"/>
    <property type="project" value="UniProtKB-UniRule"/>
</dbReference>
<dbReference type="CDD" id="cd03109">
    <property type="entry name" value="DTBS"/>
    <property type="match status" value="1"/>
</dbReference>
<dbReference type="Gene3D" id="3.40.50.300">
    <property type="entry name" value="P-loop containing nucleotide triphosphate hydrolases"/>
    <property type="match status" value="1"/>
</dbReference>
<dbReference type="HAMAP" id="MF_00336">
    <property type="entry name" value="BioD"/>
    <property type="match status" value="1"/>
</dbReference>
<dbReference type="InterPro" id="IPR004472">
    <property type="entry name" value="DTB_synth_BioD"/>
</dbReference>
<dbReference type="InterPro" id="IPR027417">
    <property type="entry name" value="P-loop_NTPase"/>
</dbReference>
<dbReference type="NCBIfam" id="TIGR00347">
    <property type="entry name" value="bioD"/>
    <property type="match status" value="1"/>
</dbReference>
<dbReference type="PANTHER" id="PTHR43210:SF2">
    <property type="entry name" value="ATP-DEPENDENT DETHIOBIOTIN SYNTHETASE BIOD 2"/>
    <property type="match status" value="1"/>
</dbReference>
<dbReference type="PANTHER" id="PTHR43210">
    <property type="entry name" value="DETHIOBIOTIN SYNTHETASE"/>
    <property type="match status" value="1"/>
</dbReference>
<dbReference type="Pfam" id="PF13500">
    <property type="entry name" value="AAA_26"/>
    <property type="match status" value="1"/>
</dbReference>
<dbReference type="PIRSF" id="PIRSF006755">
    <property type="entry name" value="DTB_synth"/>
    <property type="match status" value="1"/>
</dbReference>
<dbReference type="SUPFAM" id="SSF52540">
    <property type="entry name" value="P-loop containing nucleoside triphosphate hydrolases"/>
    <property type="match status" value="1"/>
</dbReference>
<protein>
    <recommendedName>
        <fullName evidence="1">ATP-dependent dethiobiotin synthetase BioD</fullName>
        <ecNumber evidence="1">6.3.3.3</ecNumber>
    </recommendedName>
    <alternativeName>
        <fullName evidence="1">DTB synthetase</fullName>
        <shortName evidence="1">DTBS</shortName>
    </alternativeName>
    <alternativeName>
        <fullName evidence="1">Dethiobiotin synthase</fullName>
    </alternativeName>
</protein>
<name>BIOD_GEOSW</name>